<gene>
    <name evidence="1" type="primary">truB</name>
    <name type="ordered locus">APH_0769</name>
</gene>
<comment type="function">
    <text evidence="1">Responsible for synthesis of pseudouridine from uracil-55 in the psi GC loop of transfer RNAs.</text>
</comment>
<comment type="catalytic activity">
    <reaction evidence="1">
        <text>uridine(55) in tRNA = pseudouridine(55) in tRNA</text>
        <dbReference type="Rhea" id="RHEA:42532"/>
        <dbReference type="Rhea" id="RHEA-COMP:10101"/>
        <dbReference type="Rhea" id="RHEA-COMP:10102"/>
        <dbReference type="ChEBI" id="CHEBI:65314"/>
        <dbReference type="ChEBI" id="CHEBI:65315"/>
        <dbReference type="EC" id="5.4.99.25"/>
    </reaction>
</comment>
<comment type="similarity">
    <text evidence="1">Belongs to the pseudouridine synthase TruB family. Type 1 subfamily.</text>
</comment>
<sequence>MKHGWLNIDKPYGVSSGSVVGKLKKMLQCKVGHAGTLDPLATGVLPIAFGEATKTTNYATDTLKSYEVTIQWGEQRDTDDKEGKIIRTSTLRPTEHSIKEALQQYVGVIQQIPSTFSAIKVGGMRAYSLSRMGKEVALAPRSVCITEIELLSVDSGSNTADLRITCGKGVYVRAVARDLGITLGCYGYVARLRRTMVGPFTEANIVTLQELETLVGENKLEEAVFPLSIVMSGLPHIEIDVETAKVVKNGRNIRLVDAALNGLYIVENCDMCYLSQAGGVPVAICEVVDGTAKPVRVFNV</sequence>
<proteinExistence type="inferred from homology"/>
<keyword id="KW-0413">Isomerase</keyword>
<keyword id="KW-0819">tRNA processing</keyword>
<name>TRUB_ANAPZ</name>
<evidence type="ECO:0000255" key="1">
    <source>
        <dbReference type="HAMAP-Rule" id="MF_01080"/>
    </source>
</evidence>
<organism>
    <name type="scientific">Anaplasma phagocytophilum (strain HZ)</name>
    <dbReference type="NCBI Taxonomy" id="212042"/>
    <lineage>
        <taxon>Bacteria</taxon>
        <taxon>Pseudomonadati</taxon>
        <taxon>Pseudomonadota</taxon>
        <taxon>Alphaproteobacteria</taxon>
        <taxon>Rickettsiales</taxon>
        <taxon>Anaplasmataceae</taxon>
        <taxon>Anaplasma</taxon>
        <taxon>phagocytophilum group</taxon>
    </lineage>
</organism>
<reference key="1">
    <citation type="journal article" date="2006" name="PLoS Genet.">
        <title>Comparative genomics of emerging human ehrlichiosis agents.</title>
        <authorList>
            <person name="Dunning Hotopp J.C."/>
            <person name="Lin M."/>
            <person name="Madupu R."/>
            <person name="Crabtree J."/>
            <person name="Angiuoli S.V."/>
            <person name="Eisen J.A."/>
            <person name="Seshadri R."/>
            <person name="Ren Q."/>
            <person name="Wu M."/>
            <person name="Utterback T.R."/>
            <person name="Smith S."/>
            <person name="Lewis M."/>
            <person name="Khouri H."/>
            <person name="Zhang C."/>
            <person name="Niu H."/>
            <person name="Lin Q."/>
            <person name="Ohashi N."/>
            <person name="Zhi N."/>
            <person name="Nelson W.C."/>
            <person name="Brinkac L.M."/>
            <person name="Dodson R.J."/>
            <person name="Rosovitz M.J."/>
            <person name="Sundaram J.P."/>
            <person name="Daugherty S.C."/>
            <person name="Davidsen T."/>
            <person name="Durkin A.S."/>
            <person name="Gwinn M.L."/>
            <person name="Haft D.H."/>
            <person name="Selengut J.D."/>
            <person name="Sullivan S.A."/>
            <person name="Zafar N."/>
            <person name="Zhou L."/>
            <person name="Benahmed F."/>
            <person name="Forberger H."/>
            <person name="Halpin R."/>
            <person name="Mulligan S."/>
            <person name="Robinson J."/>
            <person name="White O."/>
            <person name="Rikihisa Y."/>
            <person name="Tettelin H."/>
        </authorList>
    </citation>
    <scope>NUCLEOTIDE SEQUENCE [LARGE SCALE GENOMIC DNA]</scope>
    <source>
        <strain>HZ</strain>
    </source>
</reference>
<protein>
    <recommendedName>
        <fullName evidence="1">tRNA pseudouridine synthase B</fullName>
        <ecNumber evidence="1">5.4.99.25</ecNumber>
    </recommendedName>
    <alternativeName>
        <fullName evidence="1">tRNA pseudouridine(55) synthase</fullName>
        <shortName evidence="1">Psi55 synthase</shortName>
    </alternativeName>
    <alternativeName>
        <fullName evidence="1">tRNA pseudouridylate synthase</fullName>
    </alternativeName>
    <alternativeName>
        <fullName evidence="1">tRNA-uridine isomerase</fullName>
    </alternativeName>
</protein>
<accession>Q2GJV3</accession>
<dbReference type="EC" id="5.4.99.25" evidence="1"/>
<dbReference type="EMBL" id="CP000235">
    <property type="protein sequence ID" value="ABD44341.1"/>
    <property type="molecule type" value="Genomic_DNA"/>
</dbReference>
<dbReference type="RefSeq" id="WP_011450869.1">
    <property type="nucleotide sequence ID" value="NC_007797.1"/>
</dbReference>
<dbReference type="SMR" id="Q2GJV3"/>
<dbReference type="STRING" id="212042.APH_0769"/>
<dbReference type="PaxDb" id="212042-APH_0769"/>
<dbReference type="EnsemblBacteria" id="ABD44341">
    <property type="protein sequence ID" value="ABD44341"/>
    <property type="gene ID" value="APH_0769"/>
</dbReference>
<dbReference type="GeneID" id="92748197"/>
<dbReference type="KEGG" id="aph:APH_0769"/>
<dbReference type="PATRIC" id="fig|212042.8.peg.823"/>
<dbReference type="eggNOG" id="COG0130">
    <property type="taxonomic scope" value="Bacteria"/>
</dbReference>
<dbReference type="HOGENOM" id="CLU_032087_0_3_5"/>
<dbReference type="Proteomes" id="UP000001943">
    <property type="component" value="Chromosome"/>
</dbReference>
<dbReference type="GO" id="GO:0003723">
    <property type="term" value="F:RNA binding"/>
    <property type="evidence" value="ECO:0007669"/>
    <property type="project" value="InterPro"/>
</dbReference>
<dbReference type="GO" id="GO:0160148">
    <property type="term" value="F:tRNA pseudouridine(55) synthase activity"/>
    <property type="evidence" value="ECO:0007669"/>
    <property type="project" value="UniProtKB-EC"/>
</dbReference>
<dbReference type="GO" id="GO:1990481">
    <property type="term" value="P:mRNA pseudouridine synthesis"/>
    <property type="evidence" value="ECO:0007669"/>
    <property type="project" value="TreeGrafter"/>
</dbReference>
<dbReference type="GO" id="GO:0031119">
    <property type="term" value="P:tRNA pseudouridine synthesis"/>
    <property type="evidence" value="ECO:0007669"/>
    <property type="project" value="UniProtKB-UniRule"/>
</dbReference>
<dbReference type="CDD" id="cd02573">
    <property type="entry name" value="PseudoU_synth_EcTruB"/>
    <property type="match status" value="1"/>
</dbReference>
<dbReference type="Gene3D" id="3.30.2350.10">
    <property type="entry name" value="Pseudouridine synthase"/>
    <property type="match status" value="1"/>
</dbReference>
<dbReference type="HAMAP" id="MF_01080">
    <property type="entry name" value="TruB_bact"/>
    <property type="match status" value="1"/>
</dbReference>
<dbReference type="InterPro" id="IPR020103">
    <property type="entry name" value="PsdUridine_synth_cat_dom_sf"/>
</dbReference>
<dbReference type="InterPro" id="IPR002501">
    <property type="entry name" value="PsdUridine_synth_N"/>
</dbReference>
<dbReference type="InterPro" id="IPR014780">
    <property type="entry name" value="tRNA_psdUridine_synth_TruB"/>
</dbReference>
<dbReference type="InterPro" id="IPR032819">
    <property type="entry name" value="TruB_C"/>
</dbReference>
<dbReference type="NCBIfam" id="TIGR00431">
    <property type="entry name" value="TruB"/>
    <property type="match status" value="1"/>
</dbReference>
<dbReference type="PANTHER" id="PTHR13767:SF2">
    <property type="entry name" value="PSEUDOURIDYLATE SYNTHASE TRUB1"/>
    <property type="match status" value="1"/>
</dbReference>
<dbReference type="PANTHER" id="PTHR13767">
    <property type="entry name" value="TRNA-PSEUDOURIDINE SYNTHASE"/>
    <property type="match status" value="1"/>
</dbReference>
<dbReference type="Pfam" id="PF16198">
    <property type="entry name" value="TruB_C_2"/>
    <property type="match status" value="1"/>
</dbReference>
<dbReference type="Pfam" id="PF01509">
    <property type="entry name" value="TruB_N"/>
    <property type="match status" value="1"/>
</dbReference>
<dbReference type="SUPFAM" id="SSF55120">
    <property type="entry name" value="Pseudouridine synthase"/>
    <property type="match status" value="1"/>
</dbReference>
<feature type="chain" id="PRO_1000149817" description="tRNA pseudouridine synthase B">
    <location>
        <begin position="1"/>
        <end position="300"/>
    </location>
</feature>
<feature type="active site" description="Nucleophile" evidence="1">
    <location>
        <position position="38"/>
    </location>
</feature>